<keyword id="KW-0002">3D-structure</keyword>
<keyword id="KW-0539">Nucleus</keyword>
<keyword id="KW-0597">Phosphoprotein</keyword>
<keyword id="KW-0804">Transcription</keyword>
<keyword id="KW-0805">Transcription regulation</keyword>
<dbReference type="EMBL" id="ABSV01001185">
    <property type="protein sequence ID" value="EDZ71562.1"/>
    <property type="molecule type" value="Genomic_DNA"/>
</dbReference>
<dbReference type="PDB" id="5WLC">
    <property type="method" value="EM"/>
    <property type="resolution" value="3.80 A"/>
    <property type="chains" value="SV=78-206"/>
</dbReference>
<dbReference type="PDBsum" id="5WLC"/>
<dbReference type="OrthoDB" id="41058at4893"/>
<dbReference type="Proteomes" id="UP000008988">
    <property type="component" value="Unassembled WGS sequence"/>
</dbReference>
<dbReference type="GO" id="GO:0005730">
    <property type="term" value="C:nucleolus"/>
    <property type="evidence" value="ECO:0007669"/>
    <property type="project" value="UniProtKB-SubCell"/>
</dbReference>
<dbReference type="InterPro" id="IPR031404">
    <property type="entry name" value="Rrt14"/>
</dbReference>
<dbReference type="Pfam" id="PF17075">
    <property type="entry name" value="RRT14"/>
    <property type="match status" value="1"/>
</dbReference>
<evidence type="ECO:0000250" key="1"/>
<evidence type="ECO:0000250" key="2">
    <source>
        <dbReference type="UniProtKB" id="P40470"/>
    </source>
</evidence>
<evidence type="ECO:0000256" key="3">
    <source>
        <dbReference type="SAM" id="MobiDB-lite"/>
    </source>
</evidence>
<evidence type="ECO:0000305" key="4"/>
<name>RRT14_YEAS6</name>
<reference key="1">
    <citation type="journal article" date="2008" name="FEMS Yeast Res.">
        <title>Comparative genome analysis of a Saccharomyces cerevisiae wine strain.</title>
        <authorList>
            <person name="Borneman A.R."/>
            <person name="Forgan A.H."/>
            <person name="Pretorius I.S."/>
            <person name="Chambers P.J."/>
        </authorList>
    </citation>
    <scope>NUCLEOTIDE SEQUENCE [LARGE SCALE GENOMIC DNA]</scope>
    <source>
        <strain>AWRI1631</strain>
    </source>
</reference>
<feature type="chain" id="PRO_0000404348" description="Regulator of rDNA transcription 14">
    <location>
        <begin position="1"/>
        <end position="206"/>
    </location>
</feature>
<feature type="region of interest" description="Disordered" evidence="3">
    <location>
        <begin position="178"/>
        <end position="206"/>
    </location>
</feature>
<feature type="compositionally biased region" description="Acidic residues" evidence="3">
    <location>
        <begin position="197"/>
        <end position="206"/>
    </location>
</feature>
<feature type="modified residue" description="Phosphoserine" evidence="2">
    <location>
        <position position="197"/>
    </location>
</feature>
<feature type="modified residue" description="Phosphoserine" evidence="2">
    <location>
        <position position="202"/>
    </location>
</feature>
<feature type="modified residue" description="Phosphoserine" evidence="2">
    <location>
        <position position="203"/>
    </location>
</feature>
<sequence length="206" mass="23764">MSSSLSQTSKYQATSVVNGLLSNLLPGVPKIRANNGKTSVNNGSKAQLIDRNLKKRVQLQNRDVHKIKKKCKLVKKKKVKKHKLDKEQLEQLAKHQVLKKHQQEGTLTDHERKYLNKLIKRNSQNLRSWDLEEEVRDELEDIQQSILKDTVSTANTDRSKRRRFKRKQFKEDIKGSDFVKDHRYPGLTPGLAPVGLSDEEDSSEED</sequence>
<accession>B5VKI1</accession>
<proteinExistence type="evidence at protein level"/>
<gene>
    <name type="primary">RRT14</name>
    <name type="ORF">AWRI1631_90400</name>
</gene>
<protein>
    <recommendedName>
        <fullName>Regulator of rDNA transcription 14</fullName>
    </recommendedName>
</protein>
<organism>
    <name type="scientific">Saccharomyces cerevisiae (strain AWRI1631)</name>
    <name type="common">Baker's yeast</name>
    <dbReference type="NCBI Taxonomy" id="545124"/>
    <lineage>
        <taxon>Eukaryota</taxon>
        <taxon>Fungi</taxon>
        <taxon>Dikarya</taxon>
        <taxon>Ascomycota</taxon>
        <taxon>Saccharomycotina</taxon>
        <taxon>Saccharomycetes</taxon>
        <taxon>Saccharomycetales</taxon>
        <taxon>Saccharomycetaceae</taxon>
        <taxon>Saccharomyces</taxon>
    </lineage>
</organism>
<comment type="function">
    <text evidence="1">Involved in ribosome biogenesis, probably through modulation of rDNA transcription.</text>
</comment>
<comment type="subcellular location">
    <subcellularLocation>
        <location evidence="1">Nucleus</location>
        <location evidence="1">Nucleolus</location>
    </subcellularLocation>
</comment>
<comment type="similarity">
    <text evidence="4">Belongs to the RRT14 family.</text>
</comment>